<feature type="chain" id="PRO_1000093092" description="S-adenosylmethionine synthase">
    <location>
        <begin position="1"/>
        <end position="396"/>
    </location>
</feature>
<feature type="region of interest" description="Flexible loop" evidence="1">
    <location>
        <begin position="100"/>
        <end position="110"/>
    </location>
</feature>
<feature type="binding site" description="in other chain" evidence="1">
    <location>
        <position position="16"/>
    </location>
    <ligand>
        <name>ATP</name>
        <dbReference type="ChEBI" id="CHEBI:30616"/>
        <note>ligand shared between two neighboring subunits</note>
    </ligand>
</feature>
<feature type="binding site" evidence="1">
    <location>
        <position position="18"/>
    </location>
    <ligand>
        <name>Mg(2+)</name>
        <dbReference type="ChEBI" id="CHEBI:18420"/>
    </ligand>
</feature>
<feature type="binding site" evidence="1">
    <location>
        <position position="44"/>
    </location>
    <ligand>
        <name>K(+)</name>
        <dbReference type="ChEBI" id="CHEBI:29103"/>
    </ligand>
</feature>
<feature type="binding site" description="in other chain" evidence="1">
    <location>
        <position position="57"/>
    </location>
    <ligand>
        <name>L-methionine</name>
        <dbReference type="ChEBI" id="CHEBI:57844"/>
        <note>ligand shared between two neighboring subunits</note>
    </ligand>
</feature>
<feature type="binding site" description="in other chain" evidence="1">
    <location>
        <position position="100"/>
    </location>
    <ligand>
        <name>L-methionine</name>
        <dbReference type="ChEBI" id="CHEBI:57844"/>
        <note>ligand shared between two neighboring subunits</note>
    </ligand>
</feature>
<feature type="binding site" description="in other chain" evidence="1">
    <location>
        <begin position="175"/>
        <end position="177"/>
    </location>
    <ligand>
        <name>ATP</name>
        <dbReference type="ChEBI" id="CHEBI:30616"/>
        <note>ligand shared between two neighboring subunits</note>
    </ligand>
</feature>
<feature type="binding site" description="in other chain" evidence="1">
    <location>
        <begin position="242"/>
        <end position="243"/>
    </location>
    <ligand>
        <name>ATP</name>
        <dbReference type="ChEBI" id="CHEBI:30616"/>
        <note>ligand shared between two neighboring subunits</note>
    </ligand>
</feature>
<feature type="binding site" evidence="1">
    <location>
        <position position="251"/>
    </location>
    <ligand>
        <name>ATP</name>
        <dbReference type="ChEBI" id="CHEBI:30616"/>
        <note>ligand shared between two neighboring subunits</note>
    </ligand>
</feature>
<feature type="binding site" evidence="1">
    <location>
        <position position="251"/>
    </location>
    <ligand>
        <name>L-methionine</name>
        <dbReference type="ChEBI" id="CHEBI:57844"/>
        <note>ligand shared between two neighboring subunits</note>
    </ligand>
</feature>
<feature type="binding site" description="in other chain" evidence="1">
    <location>
        <begin position="257"/>
        <end position="258"/>
    </location>
    <ligand>
        <name>ATP</name>
        <dbReference type="ChEBI" id="CHEBI:30616"/>
        <note>ligand shared between two neighboring subunits</note>
    </ligand>
</feature>
<feature type="binding site" evidence="1">
    <location>
        <position position="274"/>
    </location>
    <ligand>
        <name>ATP</name>
        <dbReference type="ChEBI" id="CHEBI:30616"/>
        <note>ligand shared between two neighboring subunits</note>
    </ligand>
</feature>
<feature type="binding site" evidence="1">
    <location>
        <position position="278"/>
    </location>
    <ligand>
        <name>ATP</name>
        <dbReference type="ChEBI" id="CHEBI:30616"/>
        <note>ligand shared between two neighboring subunits</note>
    </ligand>
</feature>
<feature type="binding site" description="in other chain" evidence="1">
    <location>
        <position position="282"/>
    </location>
    <ligand>
        <name>L-methionine</name>
        <dbReference type="ChEBI" id="CHEBI:57844"/>
        <note>ligand shared between two neighboring subunits</note>
    </ligand>
</feature>
<gene>
    <name evidence="1" type="primary">metK</name>
    <name type="ordered locus">SPH_0862</name>
</gene>
<protein>
    <recommendedName>
        <fullName evidence="1">S-adenosylmethionine synthase</fullName>
        <shortName evidence="1">AdoMet synthase</shortName>
        <ecNumber evidence="1">2.5.1.6</ecNumber>
    </recommendedName>
    <alternativeName>
        <fullName evidence="1">MAT</fullName>
    </alternativeName>
    <alternativeName>
        <fullName evidence="1">Methionine adenosyltransferase</fullName>
    </alternativeName>
</protein>
<dbReference type="EC" id="2.5.1.6" evidence="1"/>
<dbReference type="EMBL" id="CP000936">
    <property type="protein sequence ID" value="ACA37087.1"/>
    <property type="molecule type" value="Genomic_DNA"/>
</dbReference>
<dbReference type="RefSeq" id="WP_000003935.1">
    <property type="nucleotide sequence ID" value="NC_010380.1"/>
</dbReference>
<dbReference type="SMR" id="B1IAT8"/>
<dbReference type="KEGG" id="spv:SPH_0862"/>
<dbReference type="HOGENOM" id="CLU_041802_1_1_9"/>
<dbReference type="UniPathway" id="UPA00315">
    <property type="reaction ID" value="UER00080"/>
</dbReference>
<dbReference type="Proteomes" id="UP000002163">
    <property type="component" value="Chromosome"/>
</dbReference>
<dbReference type="GO" id="GO:0005737">
    <property type="term" value="C:cytoplasm"/>
    <property type="evidence" value="ECO:0007669"/>
    <property type="project" value="UniProtKB-SubCell"/>
</dbReference>
<dbReference type="GO" id="GO:0005524">
    <property type="term" value="F:ATP binding"/>
    <property type="evidence" value="ECO:0007669"/>
    <property type="project" value="UniProtKB-UniRule"/>
</dbReference>
<dbReference type="GO" id="GO:0000287">
    <property type="term" value="F:magnesium ion binding"/>
    <property type="evidence" value="ECO:0007669"/>
    <property type="project" value="UniProtKB-UniRule"/>
</dbReference>
<dbReference type="GO" id="GO:0004478">
    <property type="term" value="F:methionine adenosyltransferase activity"/>
    <property type="evidence" value="ECO:0007669"/>
    <property type="project" value="UniProtKB-UniRule"/>
</dbReference>
<dbReference type="GO" id="GO:0006730">
    <property type="term" value="P:one-carbon metabolic process"/>
    <property type="evidence" value="ECO:0007669"/>
    <property type="project" value="UniProtKB-KW"/>
</dbReference>
<dbReference type="GO" id="GO:0006556">
    <property type="term" value="P:S-adenosylmethionine biosynthetic process"/>
    <property type="evidence" value="ECO:0007669"/>
    <property type="project" value="UniProtKB-UniRule"/>
</dbReference>
<dbReference type="CDD" id="cd18079">
    <property type="entry name" value="S-AdoMet_synt"/>
    <property type="match status" value="1"/>
</dbReference>
<dbReference type="FunFam" id="3.30.300.10:FF:000003">
    <property type="entry name" value="S-adenosylmethionine synthase"/>
    <property type="match status" value="1"/>
</dbReference>
<dbReference type="Gene3D" id="3.30.300.10">
    <property type="match status" value="3"/>
</dbReference>
<dbReference type="HAMAP" id="MF_00086">
    <property type="entry name" value="S_AdoMet_synth1"/>
    <property type="match status" value="1"/>
</dbReference>
<dbReference type="InterPro" id="IPR022631">
    <property type="entry name" value="ADOMET_SYNTHASE_CS"/>
</dbReference>
<dbReference type="InterPro" id="IPR022630">
    <property type="entry name" value="S-AdoMet_synt_C"/>
</dbReference>
<dbReference type="InterPro" id="IPR022629">
    <property type="entry name" value="S-AdoMet_synt_central"/>
</dbReference>
<dbReference type="InterPro" id="IPR022628">
    <property type="entry name" value="S-AdoMet_synt_N"/>
</dbReference>
<dbReference type="InterPro" id="IPR002133">
    <property type="entry name" value="S-AdoMet_synthetase"/>
</dbReference>
<dbReference type="InterPro" id="IPR022636">
    <property type="entry name" value="S-AdoMet_synthetase_sfam"/>
</dbReference>
<dbReference type="NCBIfam" id="TIGR01034">
    <property type="entry name" value="metK"/>
    <property type="match status" value="1"/>
</dbReference>
<dbReference type="PANTHER" id="PTHR11964">
    <property type="entry name" value="S-ADENOSYLMETHIONINE SYNTHETASE"/>
    <property type="match status" value="1"/>
</dbReference>
<dbReference type="Pfam" id="PF02773">
    <property type="entry name" value="S-AdoMet_synt_C"/>
    <property type="match status" value="1"/>
</dbReference>
<dbReference type="Pfam" id="PF02772">
    <property type="entry name" value="S-AdoMet_synt_M"/>
    <property type="match status" value="1"/>
</dbReference>
<dbReference type="Pfam" id="PF00438">
    <property type="entry name" value="S-AdoMet_synt_N"/>
    <property type="match status" value="1"/>
</dbReference>
<dbReference type="PIRSF" id="PIRSF000497">
    <property type="entry name" value="MAT"/>
    <property type="match status" value="1"/>
</dbReference>
<dbReference type="SUPFAM" id="SSF55973">
    <property type="entry name" value="S-adenosylmethionine synthetase"/>
    <property type="match status" value="3"/>
</dbReference>
<dbReference type="PROSITE" id="PS00376">
    <property type="entry name" value="ADOMET_SYNTHASE_1"/>
    <property type="match status" value="1"/>
</dbReference>
<dbReference type="PROSITE" id="PS00377">
    <property type="entry name" value="ADOMET_SYNTHASE_2"/>
    <property type="match status" value="1"/>
</dbReference>
<name>METK_STRPI</name>
<evidence type="ECO:0000255" key="1">
    <source>
        <dbReference type="HAMAP-Rule" id="MF_00086"/>
    </source>
</evidence>
<comment type="function">
    <text evidence="1">Catalyzes the formation of S-adenosylmethionine (AdoMet) from methionine and ATP. The overall synthetic reaction is composed of two sequential steps, AdoMet formation and the subsequent tripolyphosphate hydrolysis which occurs prior to release of AdoMet from the enzyme.</text>
</comment>
<comment type="catalytic activity">
    <reaction evidence="1">
        <text>L-methionine + ATP + H2O = S-adenosyl-L-methionine + phosphate + diphosphate</text>
        <dbReference type="Rhea" id="RHEA:21080"/>
        <dbReference type="ChEBI" id="CHEBI:15377"/>
        <dbReference type="ChEBI" id="CHEBI:30616"/>
        <dbReference type="ChEBI" id="CHEBI:33019"/>
        <dbReference type="ChEBI" id="CHEBI:43474"/>
        <dbReference type="ChEBI" id="CHEBI:57844"/>
        <dbReference type="ChEBI" id="CHEBI:59789"/>
        <dbReference type="EC" id="2.5.1.6"/>
    </reaction>
</comment>
<comment type="cofactor">
    <cofactor evidence="1">
        <name>Mg(2+)</name>
        <dbReference type="ChEBI" id="CHEBI:18420"/>
    </cofactor>
    <text evidence="1">Binds 2 divalent ions per subunit.</text>
</comment>
<comment type="cofactor">
    <cofactor evidence="1">
        <name>K(+)</name>
        <dbReference type="ChEBI" id="CHEBI:29103"/>
    </cofactor>
    <text evidence="1">Binds 1 potassium ion per subunit.</text>
</comment>
<comment type="pathway">
    <text evidence="1">Amino-acid biosynthesis; S-adenosyl-L-methionine biosynthesis; S-adenosyl-L-methionine from L-methionine: step 1/1.</text>
</comment>
<comment type="subunit">
    <text evidence="1">Homotetramer; dimer of dimers.</text>
</comment>
<comment type="subcellular location">
    <subcellularLocation>
        <location evidence="1">Cytoplasm</location>
    </subcellularLocation>
</comment>
<comment type="similarity">
    <text evidence="1">Belongs to the AdoMet synthase family.</text>
</comment>
<reference key="1">
    <citation type="journal article" date="2010" name="Genome Biol.">
        <title>Structure and dynamics of the pan-genome of Streptococcus pneumoniae and closely related species.</title>
        <authorList>
            <person name="Donati C."/>
            <person name="Hiller N.L."/>
            <person name="Tettelin H."/>
            <person name="Muzzi A."/>
            <person name="Croucher N.J."/>
            <person name="Angiuoli S.V."/>
            <person name="Oggioni M."/>
            <person name="Dunning Hotopp J.C."/>
            <person name="Hu F.Z."/>
            <person name="Riley D.R."/>
            <person name="Covacci A."/>
            <person name="Mitchell T.J."/>
            <person name="Bentley S.D."/>
            <person name="Kilian M."/>
            <person name="Ehrlich G.D."/>
            <person name="Rappuoli R."/>
            <person name="Moxon E.R."/>
            <person name="Masignani V."/>
        </authorList>
    </citation>
    <scope>NUCLEOTIDE SEQUENCE [LARGE SCALE GENOMIC DNA]</scope>
    <source>
        <strain>Hungary19A-6</strain>
    </source>
</reference>
<sequence length="396" mass="43115">MSERKLFTSESVSEGHPDKIADQISDAILDAILAKDPEAHVAAETAVYTGSVHVFGEISTNAYVDINRVVRDTIAEIGYTNTEYGFSAETVGVHPSLVEQSPDIAQGVNEALEVRGNADQDPLDLIGAGDQGLMFGFAVDETEELMPLPIALSHKLVRRLAELRKSGEISYLRPDAKSQVTVEYDENDRPVRVDTVVISTQHDPEATNEQIHQDVIDKVIKEVIPSSYLDDKTKFFINPTGRFVIGGPQGDSGLTGRKIIVDTYGGYSRHGGGAFSGKDATKVDRSASYAARYIAKNIVAAGLAKKAEVQLAYAIGVAQPVSVRIDTFGTGTVAESQLEKAARQIFDLRPAGIIQMLDLKRPIYRQTSAYGHMGRTDIDLPWERLDKVDALKEAVK</sequence>
<organism>
    <name type="scientific">Streptococcus pneumoniae (strain Hungary19A-6)</name>
    <dbReference type="NCBI Taxonomy" id="487214"/>
    <lineage>
        <taxon>Bacteria</taxon>
        <taxon>Bacillati</taxon>
        <taxon>Bacillota</taxon>
        <taxon>Bacilli</taxon>
        <taxon>Lactobacillales</taxon>
        <taxon>Streptococcaceae</taxon>
        <taxon>Streptococcus</taxon>
    </lineage>
</organism>
<accession>B1IAT8</accession>
<proteinExistence type="inferred from homology"/>
<keyword id="KW-0067">ATP-binding</keyword>
<keyword id="KW-0963">Cytoplasm</keyword>
<keyword id="KW-0460">Magnesium</keyword>
<keyword id="KW-0479">Metal-binding</keyword>
<keyword id="KW-0547">Nucleotide-binding</keyword>
<keyword id="KW-0554">One-carbon metabolism</keyword>
<keyword id="KW-0630">Potassium</keyword>
<keyword id="KW-0808">Transferase</keyword>